<feature type="chain" id="PRO_1000187220" description="L-rhamnose mutarotase">
    <location>
        <begin position="1"/>
        <end position="104"/>
    </location>
</feature>
<feature type="active site" description="Proton donor" evidence="1">
    <location>
        <position position="22"/>
    </location>
</feature>
<feature type="binding site" evidence="1">
    <location>
        <position position="18"/>
    </location>
    <ligand>
        <name>substrate</name>
    </ligand>
</feature>
<feature type="binding site" evidence="1">
    <location>
        <position position="41"/>
    </location>
    <ligand>
        <name>substrate</name>
    </ligand>
</feature>
<feature type="binding site" evidence="1">
    <location>
        <begin position="76"/>
        <end position="77"/>
    </location>
    <ligand>
        <name>substrate</name>
    </ligand>
</feature>
<keyword id="KW-0119">Carbohydrate metabolism</keyword>
<keyword id="KW-0963">Cytoplasm</keyword>
<keyword id="KW-0413">Isomerase</keyword>
<keyword id="KW-0684">Rhamnose metabolism</keyword>
<gene>
    <name evidence="1" type="primary">rhaM</name>
    <name type="ordered locus">ECUMN_4429</name>
</gene>
<evidence type="ECO:0000255" key="1">
    <source>
        <dbReference type="HAMAP-Rule" id="MF_01663"/>
    </source>
</evidence>
<organism>
    <name type="scientific">Escherichia coli O17:K52:H18 (strain UMN026 / ExPEC)</name>
    <dbReference type="NCBI Taxonomy" id="585056"/>
    <lineage>
        <taxon>Bacteria</taxon>
        <taxon>Pseudomonadati</taxon>
        <taxon>Pseudomonadota</taxon>
        <taxon>Gammaproteobacteria</taxon>
        <taxon>Enterobacterales</taxon>
        <taxon>Enterobacteriaceae</taxon>
        <taxon>Escherichia</taxon>
    </lineage>
</organism>
<reference key="1">
    <citation type="journal article" date="2009" name="PLoS Genet.">
        <title>Organised genome dynamics in the Escherichia coli species results in highly diverse adaptive paths.</title>
        <authorList>
            <person name="Touchon M."/>
            <person name="Hoede C."/>
            <person name="Tenaillon O."/>
            <person name="Barbe V."/>
            <person name="Baeriswyl S."/>
            <person name="Bidet P."/>
            <person name="Bingen E."/>
            <person name="Bonacorsi S."/>
            <person name="Bouchier C."/>
            <person name="Bouvet O."/>
            <person name="Calteau A."/>
            <person name="Chiapello H."/>
            <person name="Clermont O."/>
            <person name="Cruveiller S."/>
            <person name="Danchin A."/>
            <person name="Diard M."/>
            <person name="Dossat C."/>
            <person name="Karoui M.E."/>
            <person name="Frapy E."/>
            <person name="Garry L."/>
            <person name="Ghigo J.M."/>
            <person name="Gilles A.M."/>
            <person name="Johnson J."/>
            <person name="Le Bouguenec C."/>
            <person name="Lescat M."/>
            <person name="Mangenot S."/>
            <person name="Martinez-Jehanne V."/>
            <person name="Matic I."/>
            <person name="Nassif X."/>
            <person name="Oztas S."/>
            <person name="Petit M.A."/>
            <person name="Pichon C."/>
            <person name="Rouy Z."/>
            <person name="Ruf C.S."/>
            <person name="Schneider D."/>
            <person name="Tourret J."/>
            <person name="Vacherie B."/>
            <person name="Vallenet D."/>
            <person name="Medigue C."/>
            <person name="Rocha E.P.C."/>
            <person name="Denamur E."/>
        </authorList>
    </citation>
    <scope>NUCLEOTIDE SEQUENCE [LARGE SCALE GENOMIC DNA]</scope>
    <source>
        <strain>UMN026 / ExPEC</strain>
    </source>
</reference>
<sequence length="104" mass="12263">MIRKAFVMQVNPDAHEEYQRRHNPIWPELEAVLKSHGAHNYAIYLDKARNLLFATVEIESEERWNAVASTEICQRWWKYMTDVMPANPDNSPVSSELQEVFYLP</sequence>
<protein>
    <recommendedName>
        <fullName evidence="1">L-rhamnose mutarotase</fullName>
        <ecNumber evidence="1">5.1.3.32</ecNumber>
    </recommendedName>
    <alternativeName>
        <fullName evidence="1">Rhamnose 1-epimerase</fullName>
    </alternativeName>
    <alternativeName>
        <fullName evidence="1">Type-3 mutarotase</fullName>
    </alternativeName>
</protein>
<accession>B7NFJ9</accession>
<proteinExistence type="inferred from homology"/>
<comment type="function">
    <text evidence="1">Involved in the anomeric conversion of L-rhamnose.</text>
</comment>
<comment type="catalytic activity">
    <reaction evidence="1">
        <text>alpha-L-rhamnose = beta-L-rhamnose</text>
        <dbReference type="Rhea" id="RHEA:25584"/>
        <dbReference type="ChEBI" id="CHEBI:27586"/>
        <dbReference type="ChEBI" id="CHEBI:27907"/>
        <dbReference type="EC" id="5.1.3.32"/>
    </reaction>
</comment>
<comment type="pathway">
    <text evidence="1">Carbohydrate metabolism; L-rhamnose metabolism.</text>
</comment>
<comment type="subunit">
    <text evidence="1">Homodimer.</text>
</comment>
<comment type="subcellular location">
    <subcellularLocation>
        <location evidence="1">Cytoplasm</location>
    </subcellularLocation>
</comment>
<comment type="similarity">
    <text evidence="1">Belongs to the rhamnose mutarotase family.</text>
</comment>
<name>RHAM_ECOLU</name>
<dbReference type="EC" id="5.1.3.32" evidence="1"/>
<dbReference type="EMBL" id="CU928163">
    <property type="protein sequence ID" value="CAR15556.1"/>
    <property type="molecule type" value="Genomic_DNA"/>
</dbReference>
<dbReference type="RefSeq" id="WP_000619508.1">
    <property type="nucleotide sequence ID" value="NC_011751.1"/>
</dbReference>
<dbReference type="RefSeq" id="YP_002415045.1">
    <property type="nucleotide sequence ID" value="NC_011751.1"/>
</dbReference>
<dbReference type="SMR" id="B7NFJ9"/>
<dbReference type="STRING" id="585056.ECUMN_4429"/>
<dbReference type="KEGG" id="eum:ECUMN_4429"/>
<dbReference type="PATRIC" id="fig|585056.7.peg.4598"/>
<dbReference type="HOGENOM" id="CLU_100689_2_0_6"/>
<dbReference type="UniPathway" id="UPA00125"/>
<dbReference type="Proteomes" id="UP000007097">
    <property type="component" value="Chromosome"/>
</dbReference>
<dbReference type="GO" id="GO:0005737">
    <property type="term" value="C:cytoplasm"/>
    <property type="evidence" value="ECO:0007669"/>
    <property type="project" value="UniProtKB-SubCell"/>
</dbReference>
<dbReference type="GO" id="GO:0062192">
    <property type="term" value="F:L-rhamnose mutarotase activity"/>
    <property type="evidence" value="ECO:0007669"/>
    <property type="project" value="UniProtKB-EC"/>
</dbReference>
<dbReference type="GO" id="GO:0019301">
    <property type="term" value="P:rhamnose catabolic process"/>
    <property type="evidence" value="ECO:0007669"/>
    <property type="project" value="TreeGrafter"/>
</dbReference>
<dbReference type="FunFam" id="3.30.70.100:FF:000013">
    <property type="entry name" value="L-rhamnose mutarotase"/>
    <property type="match status" value="1"/>
</dbReference>
<dbReference type="Gene3D" id="3.30.70.100">
    <property type="match status" value="1"/>
</dbReference>
<dbReference type="HAMAP" id="MF_01663">
    <property type="entry name" value="L_rham_rotase"/>
    <property type="match status" value="1"/>
</dbReference>
<dbReference type="InterPro" id="IPR011008">
    <property type="entry name" value="Dimeric_a/b-barrel"/>
</dbReference>
<dbReference type="InterPro" id="IPR013448">
    <property type="entry name" value="L-rhamnose_mutarotase"/>
</dbReference>
<dbReference type="InterPro" id="IPR008000">
    <property type="entry name" value="Rham/fucose_mutarotase"/>
</dbReference>
<dbReference type="NCBIfam" id="TIGR02625">
    <property type="entry name" value="YiiL_rotase"/>
    <property type="match status" value="1"/>
</dbReference>
<dbReference type="PANTHER" id="PTHR34389">
    <property type="entry name" value="L-RHAMNOSE MUTAROTASE"/>
    <property type="match status" value="1"/>
</dbReference>
<dbReference type="PANTHER" id="PTHR34389:SF2">
    <property type="entry name" value="L-RHAMNOSE MUTAROTASE"/>
    <property type="match status" value="1"/>
</dbReference>
<dbReference type="Pfam" id="PF05336">
    <property type="entry name" value="rhaM"/>
    <property type="match status" value="1"/>
</dbReference>
<dbReference type="SUPFAM" id="SSF54909">
    <property type="entry name" value="Dimeric alpha+beta barrel"/>
    <property type="match status" value="1"/>
</dbReference>